<organism>
    <name type="scientific">Arabidopsis thaliana</name>
    <name type="common">Mouse-ear cress</name>
    <dbReference type="NCBI Taxonomy" id="3702"/>
    <lineage>
        <taxon>Eukaryota</taxon>
        <taxon>Viridiplantae</taxon>
        <taxon>Streptophyta</taxon>
        <taxon>Embryophyta</taxon>
        <taxon>Tracheophyta</taxon>
        <taxon>Spermatophyta</taxon>
        <taxon>Magnoliopsida</taxon>
        <taxon>eudicotyledons</taxon>
        <taxon>Gunneridae</taxon>
        <taxon>Pentapetalae</taxon>
        <taxon>rosids</taxon>
        <taxon>malvids</taxon>
        <taxon>Brassicales</taxon>
        <taxon>Brassicaceae</taxon>
        <taxon>Camelineae</taxon>
        <taxon>Arabidopsis</taxon>
    </lineage>
</organism>
<comment type="interaction">
    <interactant intactId="EBI-2356227">
        <id>Q8L5T5</id>
    </interactant>
    <interactant intactId="EBI-4426144">
        <id>Q9C9L2</id>
        <label>TCP15</label>
    </interactant>
    <organismsDiffer>false</organismsDiffer>
    <experiments>3</experiments>
</comment>
<comment type="tissue specificity">
    <text evidence="3">Expressed in young shoots, roots, stems, leaves and flowers.</text>
</comment>
<comment type="similarity">
    <text evidence="4">Belongs to the LOB domain-containing protein family.</text>
</comment>
<comment type="sequence caution" evidence="4">
    <conflict type="erroneous termination">
        <sequence resource="EMBL-CDS" id="ABK28530"/>
    </conflict>
    <text>Extended C-terminus.</text>
</comment>
<protein>
    <recommendedName>
        <fullName>LOB domain-containing protein 15</fullName>
    </recommendedName>
    <alternativeName>
        <fullName>ASYMMETRIC LEAVES 2-like protein 11</fullName>
        <shortName>AS2-like protein 11</shortName>
    </alternativeName>
</protein>
<gene>
    <name type="primary">LBD15</name>
    <name type="synonym">ASL11</name>
    <name type="ordered locus">At2g40470</name>
    <name type="ORF">T2P4.18</name>
</gene>
<proteinExistence type="evidence at protein level"/>
<feature type="chain" id="PRO_0000132266" description="LOB domain-containing protein 15">
    <location>
        <begin position="1"/>
        <end position="224"/>
    </location>
</feature>
<feature type="domain" description="LOB" evidence="1">
    <location>
        <begin position="44"/>
        <end position="145"/>
    </location>
</feature>
<feature type="region of interest" description="Disordered" evidence="2">
    <location>
        <begin position="171"/>
        <end position="224"/>
    </location>
</feature>
<feature type="compositionally biased region" description="Pro residues" evidence="2">
    <location>
        <begin position="178"/>
        <end position="198"/>
    </location>
</feature>
<feature type="sequence conflict" description="In Ref. 5; AAM67163." evidence="4" ref="5">
    <original>R</original>
    <variation>K</variation>
    <location>
        <position position="114"/>
    </location>
</feature>
<dbReference type="EMBL" id="AF447889">
    <property type="protein sequence ID" value="AAL38034.1"/>
    <property type="molecule type" value="mRNA"/>
</dbReference>
<dbReference type="EMBL" id="AB473844">
    <property type="protein sequence ID" value="BAH10555.1"/>
    <property type="molecule type" value="mRNA"/>
</dbReference>
<dbReference type="EMBL" id="AC002336">
    <property type="protein sequence ID" value="AAB87589.1"/>
    <property type="molecule type" value="Genomic_DNA"/>
</dbReference>
<dbReference type="EMBL" id="CP002685">
    <property type="protein sequence ID" value="AEC09834.1"/>
    <property type="molecule type" value="Genomic_DNA"/>
</dbReference>
<dbReference type="EMBL" id="AY088856">
    <property type="protein sequence ID" value="AAM67163.1"/>
    <property type="molecule type" value="mRNA"/>
</dbReference>
<dbReference type="EMBL" id="DQ446613">
    <property type="protein sequence ID" value="ABE65897.1"/>
    <property type="molecule type" value="mRNA"/>
</dbReference>
<dbReference type="EMBL" id="DQ653051">
    <property type="protein sequence ID" value="ABK28530.1"/>
    <property type="status" value="ALT_SEQ"/>
    <property type="molecule type" value="mRNA"/>
</dbReference>
<dbReference type="EMBL" id="BT025288">
    <property type="protein sequence ID" value="ABF19041.1"/>
    <property type="molecule type" value="mRNA"/>
</dbReference>
<dbReference type="PIR" id="H84829">
    <property type="entry name" value="H84829"/>
</dbReference>
<dbReference type="RefSeq" id="NP_565933.1">
    <property type="nucleotide sequence ID" value="NM_129608.3"/>
</dbReference>
<dbReference type="SMR" id="Q8L5T5"/>
<dbReference type="BioGRID" id="3979">
    <property type="interactions" value="10"/>
</dbReference>
<dbReference type="FunCoup" id="Q8L5T5">
    <property type="interactions" value="40"/>
</dbReference>
<dbReference type="IntAct" id="Q8L5T5">
    <property type="interactions" value="18"/>
</dbReference>
<dbReference type="STRING" id="3702.Q8L5T5"/>
<dbReference type="GlyGen" id="Q8L5T5">
    <property type="glycosylation" value="1 site"/>
</dbReference>
<dbReference type="PaxDb" id="3702-AT2G40470.1"/>
<dbReference type="ProteomicsDB" id="250733"/>
<dbReference type="EnsemblPlants" id="AT2G40470.1">
    <property type="protein sequence ID" value="AT2G40470.1"/>
    <property type="gene ID" value="AT2G40470"/>
</dbReference>
<dbReference type="GeneID" id="818641"/>
<dbReference type="Gramene" id="AT2G40470.1">
    <property type="protein sequence ID" value="AT2G40470.1"/>
    <property type="gene ID" value="AT2G40470"/>
</dbReference>
<dbReference type="KEGG" id="ath:AT2G40470"/>
<dbReference type="Araport" id="AT2G40470"/>
<dbReference type="TAIR" id="AT2G40470">
    <property type="gene designation" value="LBD15"/>
</dbReference>
<dbReference type="eggNOG" id="ENOG502QUQH">
    <property type="taxonomic scope" value="Eukaryota"/>
</dbReference>
<dbReference type="HOGENOM" id="CLU_058353_0_0_1"/>
<dbReference type="InParanoid" id="Q8L5T5"/>
<dbReference type="OMA" id="RMGRRQI"/>
<dbReference type="OrthoDB" id="1927167at2759"/>
<dbReference type="PhylomeDB" id="Q8L5T5"/>
<dbReference type="PRO" id="PR:Q8L5T5"/>
<dbReference type="Proteomes" id="UP000006548">
    <property type="component" value="Chromosome 2"/>
</dbReference>
<dbReference type="ExpressionAtlas" id="Q8L5T5">
    <property type="expression patterns" value="baseline and differential"/>
</dbReference>
<dbReference type="GO" id="GO:0005634">
    <property type="term" value="C:nucleus"/>
    <property type="evidence" value="ECO:0000314"/>
    <property type="project" value="TAIR"/>
</dbReference>
<dbReference type="GO" id="GO:0000976">
    <property type="term" value="F:transcription cis-regulatory region binding"/>
    <property type="evidence" value="ECO:0000353"/>
    <property type="project" value="TAIR"/>
</dbReference>
<dbReference type="GO" id="GO:0010628">
    <property type="term" value="P:positive regulation of gene expression"/>
    <property type="evidence" value="ECO:0000314"/>
    <property type="project" value="TAIR"/>
</dbReference>
<dbReference type="GO" id="GO:1905177">
    <property type="term" value="P:tracheary element differentiation"/>
    <property type="evidence" value="ECO:0000315"/>
    <property type="project" value="TAIR"/>
</dbReference>
<dbReference type="InterPro" id="IPR004883">
    <property type="entry name" value="LOB"/>
</dbReference>
<dbReference type="PANTHER" id="PTHR31301:SF87">
    <property type="entry name" value="LOB DOMAIN-CONTAINING PROTEIN 15"/>
    <property type="match status" value="1"/>
</dbReference>
<dbReference type="PANTHER" id="PTHR31301">
    <property type="entry name" value="LOB DOMAIN-CONTAINING PROTEIN 4-RELATED"/>
    <property type="match status" value="1"/>
</dbReference>
<dbReference type="Pfam" id="PF03195">
    <property type="entry name" value="LOB"/>
    <property type="match status" value="1"/>
</dbReference>
<dbReference type="PROSITE" id="PS50891">
    <property type="entry name" value="LOB"/>
    <property type="match status" value="1"/>
</dbReference>
<evidence type="ECO:0000255" key="1">
    <source>
        <dbReference type="PROSITE-ProRule" id="PRU00291"/>
    </source>
</evidence>
<evidence type="ECO:0000256" key="2">
    <source>
        <dbReference type="SAM" id="MobiDB-lite"/>
    </source>
</evidence>
<evidence type="ECO:0000269" key="3">
    <source>
    </source>
</evidence>
<evidence type="ECO:0000305" key="4"/>
<name>LBD15_ARATH</name>
<sequence>MSRERERFEEIGKKIKREADAWPHQMAGIRRPMSGPPGTLNTITPCAACKLLRRRCAQECPFSPYFSPHEPHKFASVHKVFGASNVSKMLMEVPESQRADAANSLVYEANVRLRDPVYGCMGAISALQQQVQALQAELTAVRSEILKYKQREAVATLIVPSNSQVAGFHNSGGVSVIAPPPQRPTTPPQPTTAHPPSPSSCVFSQPTTRDLEYGNIESENNYFG</sequence>
<accession>Q8L5T5</accession>
<accession>A0MES9</accession>
<accession>B7XG65</accession>
<accession>O22888</accession>
<accession>Q1PEV4</accession>
<reference key="1">
    <citation type="journal article" date="2002" name="Plant Physiol.">
        <title>The LATERAL ORGAN BOUNDARIES gene defines a novel, plant-specific gene family.</title>
        <authorList>
            <person name="Shuai B."/>
            <person name="Reynaga-Pena C.G."/>
            <person name="Springer P.S."/>
        </authorList>
    </citation>
    <scope>NUCLEOTIDE SEQUENCE [MRNA]</scope>
    <scope>TISSUE SPECIFICITY</scope>
    <scope>GENE FAMILY</scope>
    <scope>NOMENCLATURE</scope>
    <source>
        <strain>cv. Columbia</strain>
    </source>
</reference>
<reference key="2">
    <citation type="journal article" date="2009" name="Plant J.">
        <title>Characterization of genes in the ASYMMETRIC LEAVES2/LATERAL ORGAN BOUNDARIES (AS2/LOB) family in Arabidopsis thaliana, and functional and molecular comparisons between AS2 and other family members.</title>
        <authorList>
            <person name="Matsumura Y."/>
            <person name="Iwakawa H."/>
            <person name="Machida Y."/>
            <person name="Machida C."/>
        </authorList>
    </citation>
    <scope>NUCLEOTIDE SEQUENCE [MRNA]</scope>
    <source>
        <strain>cv. Columbia</strain>
    </source>
</reference>
<reference key="3">
    <citation type="journal article" date="1999" name="Nature">
        <title>Sequence and analysis of chromosome 2 of the plant Arabidopsis thaliana.</title>
        <authorList>
            <person name="Lin X."/>
            <person name="Kaul S."/>
            <person name="Rounsley S.D."/>
            <person name="Shea T.P."/>
            <person name="Benito M.-I."/>
            <person name="Town C.D."/>
            <person name="Fujii C.Y."/>
            <person name="Mason T.M."/>
            <person name="Bowman C.L."/>
            <person name="Barnstead M.E."/>
            <person name="Feldblyum T.V."/>
            <person name="Buell C.R."/>
            <person name="Ketchum K.A."/>
            <person name="Lee J.J."/>
            <person name="Ronning C.M."/>
            <person name="Koo H.L."/>
            <person name="Moffat K.S."/>
            <person name="Cronin L.A."/>
            <person name="Shen M."/>
            <person name="Pai G."/>
            <person name="Van Aken S."/>
            <person name="Umayam L."/>
            <person name="Tallon L.J."/>
            <person name="Gill J.E."/>
            <person name="Adams M.D."/>
            <person name="Carrera A.J."/>
            <person name="Creasy T.H."/>
            <person name="Goodman H.M."/>
            <person name="Somerville C.R."/>
            <person name="Copenhaver G.P."/>
            <person name="Preuss D."/>
            <person name="Nierman W.C."/>
            <person name="White O."/>
            <person name="Eisen J.A."/>
            <person name="Salzberg S.L."/>
            <person name="Fraser C.M."/>
            <person name="Venter J.C."/>
        </authorList>
    </citation>
    <scope>NUCLEOTIDE SEQUENCE [LARGE SCALE GENOMIC DNA]</scope>
    <source>
        <strain>cv. Columbia</strain>
    </source>
</reference>
<reference key="4">
    <citation type="journal article" date="2017" name="Plant J.">
        <title>Araport11: a complete reannotation of the Arabidopsis thaliana reference genome.</title>
        <authorList>
            <person name="Cheng C.Y."/>
            <person name="Krishnakumar V."/>
            <person name="Chan A.P."/>
            <person name="Thibaud-Nissen F."/>
            <person name="Schobel S."/>
            <person name="Town C.D."/>
        </authorList>
    </citation>
    <scope>GENOME REANNOTATION</scope>
    <source>
        <strain>cv. Columbia</strain>
    </source>
</reference>
<reference key="5">
    <citation type="submission" date="2002-03" db="EMBL/GenBank/DDBJ databases">
        <title>Full-length cDNA from Arabidopsis thaliana.</title>
        <authorList>
            <person name="Brover V.V."/>
            <person name="Troukhan M.E."/>
            <person name="Alexandrov N.A."/>
            <person name="Lu Y.-P."/>
            <person name="Flavell R.B."/>
            <person name="Feldmann K.A."/>
        </authorList>
    </citation>
    <scope>NUCLEOTIDE SEQUENCE [LARGE SCALE MRNA]</scope>
</reference>
<reference key="6">
    <citation type="journal article" date="2006" name="Plant Biotechnol. J.">
        <title>Simultaneous high-throughput recombinational cloning of open reading frames in closed and open configurations.</title>
        <authorList>
            <person name="Underwood B.A."/>
            <person name="Vanderhaeghen R."/>
            <person name="Whitford R."/>
            <person name="Town C.D."/>
            <person name="Hilson P."/>
        </authorList>
    </citation>
    <scope>NUCLEOTIDE SEQUENCE [LARGE SCALE MRNA]</scope>
    <source>
        <strain>cv. Columbia</strain>
    </source>
</reference>
<reference key="7">
    <citation type="submission" date="2006-04" db="EMBL/GenBank/DDBJ databases">
        <title>Arabidopsis ORF clones.</title>
        <authorList>
            <person name="Shinn P."/>
            <person name="Chen H."/>
            <person name="Kim C.J."/>
            <person name="Ecker J.R."/>
        </authorList>
    </citation>
    <scope>NUCLEOTIDE SEQUENCE [LARGE SCALE MRNA]</scope>
    <source>
        <strain>cv. Columbia</strain>
    </source>
</reference>
<reference key="8">
    <citation type="journal article" date="2002" name="Plant Cell Physiol.">
        <title>The ASYMMETRIC LEAVES2 gene of Arabidopsis thaliana, required for formation of a symmetric flat leaf lamina, encodes a member of a novel family of proteins characterized by cysteine repeats and a leucine zipper.</title>
        <authorList>
            <person name="Iwakawa H."/>
            <person name="Ueno Y."/>
            <person name="Semiarti E."/>
            <person name="Onouchi H."/>
            <person name="Kojima S."/>
            <person name="Tsukaya H."/>
            <person name="Hasebe M."/>
            <person name="Soma T."/>
            <person name="Ikezaki M."/>
            <person name="Machida C."/>
            <person name="Machida Y."/>
        </authorList>
    </citation>
    <scope>GENE FAMILY</scope>
    <scope>NOMENCLATURE</scope>
</reference>
<keyword id="KW-1185">Reference proteome</keyword>